<proteinExistence type="inferred from homology"/>
<dbReference type="EC" id="2.1.1.197" evidence="1"/>
<dbReference type="EMBL" id="CP000764">
    <property type="protein sequence ID" value="ABS23047.1"/>
    <property type="molecule type" value="Genomic_DNA"/>
</dbReference>
<dbReference type="RefSeq" id="WP_012095273.1">
    <property type="nucleotide sequence ID" value="NC_009674.1"/>
</dbReference>
<dbReference type="SMR" id="A7GSD9"/>
<dbReference type="STRING" id="315749.Bcer98_2814"/>
<dbReference type="GeneID" id="33898070"/>
<dbReference type="KEGG" id="bcy:Bcer98_2814"/>
<dbReference type="eggNOG" id="COG4106">
    <property type="taxonomic scope" value="Bacteria"/>
</dbReference>
<dbReference type="HOGENOM" id="CLU_046586_2_3_9"/>
<dbReference type="OrthoDB" id="9760689at2"/>
<dbReference type="UniPathway" id="UPA00078"/>
<dbReference type="Proteomes" id="UP000002300">
    <property type="component" value="Chromosome"/>
</dbReference>
<dbReference type="GO" id="GO:0010340">
    <property type="term" value="F:carboxyl-O-methyltransferase activity"/>
    <property type="evidence" value="ECO:0007669"/>
    <property type="project" value="UniProtKB-UniRule"/>
</dbReference>
<dbReference type="GO" id="GO:0102130">
    <property type="term" value="F:malonyl-CoA methyltransferase activity"/>
    <property type="evidence" value="ECO:0007669"/>
    <property type="project" value="UniProtKB-EC"/>
</dbReference>
<dbReference type="GO" id="GO:0009102">
    <property type="term" value="P:biotin biosynthetic process"/>
    <property type="evidence" value="ECO:0007669"/>
    <property type="project" value="UniProtKB-UniRule"/>
</dbReference>
<dbReference type="GO" id="GO:0032259">
    <property type="term" value="P:methylation"/>
    <property type="evidence" value="ECO:0007669"/>
    <property type="project" value="UniProtKB-KW"/>
</dbReference>
<dbReference type="CDD" id="cd02440">
    <property type="entry name" value="AdoMet_MTases"/>
    <property type="match status" value="1"/>
</dbReference>
<dbReference type="Gene3D" id="3.40.50.150">
    <property type="entry name" value="Vaccinia Virus protein VP39"/>
    <property type="match status" value="1"/>
</dbReference>
<dbReference type="HAMAP" id="MF_00835">
    <property type="entry name" value="BioC"/>
    <property type="match status" value="1"/>
</dbReference>
<dbReference type="InterPro" id="IPR011814">
    <property type="entry name" value="BioC"/>
</dbReference>
<dbReference type="InterPro" id="IPR025714">
    <property type="entry name" value="Methyltranfer_dom"/>
</dbReference>
<dbReference type="InterPro" id="IPR029063">
    <property type="entry name" value="SAM-dependent_MTases_sf"/>
</dbReference>
<dbReference type="NCBIfam" id="TIGR02072">
    <property type="entry name" value="BioC"/>
    <property type="match status" value="1"/>
</dbReference>
<dbReference type="PANTHER" id="PTHR43861:SF1">
    <property type="entry name" value="TRANS-ACONITATE 2-METHYLTRANSFERASE"/>
    <property type="match status" value="1"/>
</dbReference>
<dbReference type="PANTHER" id="PTHR43861">
    <property type="entry name" value="TRANS-ACONITATE 2-METHYLTRANSFERASE-RELATED"/>
    <property type="match status" value="1"/>
</dbReference>
<dbReference type="Pfam" id="PF13847">
    <property type="entry name" value="Methyltransf_31"/>
    <property type="match status" value="1"/>
</dbReference>
<dbReference type="SUPFAM" id="SSF53335">
    <property type="entry name" value="S-adenosyl-L-methionine-dependent methyltransferases"/>
    <property type="match status" value="1"/>
</dbReference>
<accession>A7GSD9</accession>
<sequence>MINKTLLQKRFNRAAVSYDQYANVQKKMARHLLSQLEKRYSKAAAIRILELGCGTGYITEKLVHLFPNAQITAIDFAESMIAVAKQRRHVDEVTFRCEDIEKLILDDFYDVIISNATFQWLNDLQVSLVKLYKHLAGEGILLFSTFGNRTFQELHRAFERAKEEKNIKSHVSIGQRLFTKAQLQNICSIKKGNVHVSETCYIEKFTHVRDFFKSIRKVGATNSNEDTYCQSPSLFRAMLRIYERDFTKEGEIIATYHALFAHIEKEGKRRNETNTNKSRLEENCV</sequence>
<gene>
    <name evidence="1" type="primary">bioC</name>
    <name type="ordered locus">Bcer98_2814</name>
</gene>
<reference key="1">
    <citation type="journal article" date="2008" name="Chem. Biol. Interact.">
        <title>Extending the Bacillus cereus group genomics to putative food-borne pathogens of different toxicity.</title>
        <authorList>
            <person name="Lapidus A."/>
            <person name="Goltsman E."/>
            <person name="Auger S."/>
            <person name="Galleron N."/>
            <person name="Segurens B."/>
            <person name="Dossat C."/>
            <person name="Land M.L."/>
            <person name="Broussolle V."/>
            <person name="Brillard J."/>
            <person name="Guinebretiere M.-H."/>
            <person name="Sanchis V."/>
            <person name="Nguen-the C."/>
            <person name="Lereclus D."/>
            <person name="Richardson P."/>
            <person name="Wincker P."/>
            <person name="Weissenbach J."/>
            <person name="Ehrlich S.D."/>
            <person name="Sorokin A."/>
        </authorList>
    </citation>
    <scope>NUCLEOTIDE SEQUENCE [LARGE SCALE GENOMIC DNA]</scope>
    <source>
        <strain>DSM 22905 / CIP 110041 / 391-98 / NVH 391-98</strain>
    </source>
</reference>
<protein>
    <recommendedName>
        <fullName evidence="1">Malonyl-[acyl-carrier protein] O-methyltransferase</fullName>
        <shortName evidence="1">Malonyl-ACP O-methyltransferase</shortName>
        <ecNumber evidence="1">2.1.1.197</ecNumber>
    </recommendedName>
    <alternativeName>
        <fullName evidence="1">Biotin synthesis protein BioC</fullName>
    </alternativeName>
</protein>
<organism>
    <name type="scientific">Bacillus cytotoxicus (strain DSM 22905 / CIP 110041 / 391-98 / NVH 391-98)</name>
    <dbReference type="NCBI Taxonomy" id="315749"/>
    <lineage>
        <taxon>Bacteria</taxon>
        <taxon>Bacillati</taxon>
        <taxon>Bacillota</taxon>
        <taxon>Bacilli</taxon>
        <taxon>Bacillales</taxon>
        <taxon>Bacillaceae</taxon>
        <taxon>Bacillus</taxon>
        <taxon>Bacillus cereus group</taxon>
    </lineage>
</organism>
<evidence type="ECO:0000255" key="1">
    <source>
        <dbReference type="HAMAP-Rule" id="MF_00835"/>
    </source>
</evidence>
<name>BIOC_BACCN</name>
<comment type="function">
    <text evidence="1">Converts the free carboxyl group of a malonyl-thioester to its methyl ester by transfer of a methyl group from S-adenosyl-L-methionine (SAM). It allows to synthesize pimeloyl-ACP via the fatty acid synthetic pathway.</text>
</comment>
<comment type="catalytic activity">
    <reaction evidence="1">
        <text>malonyl-[ACP] + S-adenosyl-L-methionine = malonyl-[ACP] methyl ester + S-adenosyl-L-homocysteine</text>
        <dbReference type="Rhea" id="RHEA:17105"/>
        <dbReference type="Rhea" id="RHEA-COMP:9623"/>
        <dbReference type="Rhea" id="RHEA-COMP:9954"/>
        <dbReference type="ChEBI" id="CHEBI:57856"/>
        <dbReference type="ChEBI" id="CHEBI:59789"/>
        <dbReference type="ChEBI" id="CHEBI:78449"/>
        <dbReference type="ChEBI" id="CHEBI:78845"/>
        <dbReference type="EC" id="2.1.1.197"/>
    </reaction>
</comment>
<comment type="pathway">
    <text evidence="1">Cofactor biosynthesis; biotin biosynthesis.</text>
</comment>
<comment type="similarity">
    <text evidence="1">Belongs to the methyltransferase superfamily.</text>
</comment>
<feature type="chain" id="PRO_0000412479" description="Malonyl-[acyl-carrier protein] O-methyltransferase">
    <location>
        <begin position="1"/>
        <end position="285"/>
    </location>
</feature>
<keyword id="KW-0093">Biotin biosynthesis</keyword>
<keyword id="KW-0489">Methyltransferase</keyword>
<keyword id="KW-0949">S-adenosyl-L-methionine</keyword>
<keyword id="KW-0808">Transferase</keyword>